<reference key="1">
    <citation type="journal article" date="2001" name="Science">
        <title>Complete genome sequence of a virulent isolate of Streptococcus pneumoniae.</title>
        <authorList>
            <person name="Tettelin H."/>
            <person name="Nelson K.E."/>
            <person name="Paulsen I.T."/>
            <person name="Eisen J.A."/>
            <person name="Read T.D."/>
            <person name="Peterson S.N."/>
            <person name="Heidelberg J.F."/>
            <person name="DeBoy R.T."/>
            <person name="Haft D.H."/>
            <person name="Dodson R.J."/>
            <person name="Durkin A.S."/>
            <person name="Gwinn M.L."/>
            <person name="Kolonay J.F."/>
            <person name="Nelson W.C."/>
            <person name="Peterson J.D."/>
            <person name="Umayam L.A."/>
            <person name="White O."/>
            <person name="Salzberg S.L."/>
            <person name="Lewis M.R."/>
            <person name="Radune D."/>
            <person name="Holtzapple E.K."/>
            <person name="Khouri H.M."/>
            <person name="Wolf A.M."/>
            <person name="Utterback T.R."/>
            <person name="Hansen C.L."/>
            <person name="McDonald L.A."/>
            <person name="Feldblyum T.V."/>
            <person name="Angiuoli S.V."/>
            <person name="Dickinson T."/>
            <person name="Hickey E.K."/>
            <person name="Holt I.E."/>
            <person name="Loftus B.J."/>
            <person name="Yang F."/>
            <person name="Smith H.O."/>
            <person name="Venter J.C."/>
            <person name="Dougherty B.A."/>
            <person name="Morrison D.A."/>
            <person name="Hollingshead S.K."/>
            <person name="Fraser C.M."/>
        </authorList>
    </citation>
    <scope>NUCLEOTIDE SEQUENCE [LARGE SCALE GENOMIC DNA]</scope>
    <source>
        <strain>ATCC BAA-334 / TIGR4</strain>
    </source>
</reference>
<feature type="chain" id="PRO_0000093775" description="GMP reductase">
    <location>
        <begin position="1"/>
        <end position="328"/>
    </location>
</feature>
<feature type="active site" description="Thioimidate intermediate" evidence="1">
    <location>
        <position position="176"/>
    </location>
</feature>
<feature type="binding site" evidence="1">
    <location>
        <begin position="205"/>
        <end position="228"/>
    </location>
    <ligand>
        <name>NADP(+)</name>
        <dbReference type="ChEBI" id="CHEBI:58349"/>
    </ligand>
</feature>
<sequence>MLNEFPIFDYEDIQLIPNKCVIKSRAEADTSVTLGNHTFKLPVVPANMQTILDENVAEQLAKGGYFYIMHRFDEAGRIPFIKRMHNQGLIASISVGVKDYEYDFVSQLKADTPEYITIDIAHGHADSVISMIQHIKKELPDTFVIAGNVGTPEAVRELENAGADATKVGIGPGKVCITKVKTGFGTGGWQLAALRWCAKAARKPIIADGGIRTHGDIAKSIRFGASMIMIGSLFAGHIESPGKTIEVDGEQFKEYYGSASQYQKGAYKNVEGKRILLPAKGHLQDTLTEMEQDLQSAISYAGGRQVADLKHVDYVIVKNSIWNGDASH</sequence>
<comment type="function">
    <text evidence="1">Catalyzes the irreversible NADPH-dependent deamination of GMP to IMP. It functions in the conversion of nucleobase, nucleoside and nucleotide derivatives of G to A nucleotides, and in maintaining the intracellular balance of A and G nucleotides.</text>
</comment>
<comment type="catalytic activity">
    <reaction evidence="1">
        <text>IMP + NH4(+) + NADP(+) = GMP + NADPH + 2 H(+)</text>
        <dbReference type="Rhea" id="RHEA:17185"/>
        <dbReference type="ChEBI" id="CHEBI:15378"/>
        <dbReference type="ChEBI" id="CHEBI:28938"/>
        <dbReference type="ChEBI" id="CHEBI:57783"/>
        <dbReference type="ChEBI" id="CHEBI:58053"/>
        <dbReference type="ChEBI" id="CHEBI:58115"/>
        <dbReference type="ChEBI" id="CHEBI:58349"/>
        <dbReference type="EC" id="1.7.1.7"/>
    </reaction>
</comment>
<comment type="similarity">
    <text evidence="1">Belongs to the IMPDH/GMPR family. GuaC type 2 subfamily.</text>
</comment>
<organism>
    <name type="scientific">Streptococcus pneumoniae serotype 4 (strain ATCC BAA-334 / TIGR4)</name>
    <dbReference type="NCBI Taxonomy" id="170187"/>
    <lineage>
        <taxon>Bacteria</taxon>
        <taxon>Bacillati</taxon>
        <taxon>Bacillota</taxon>
        <taxon>Bacilli</taxon>
        <taxon>Lactobacillales</taxon>
        <taxon>Streptococcaceae</taxon>
        <taxon>Streptococcus</taxon>
    </lineage>
</organism>
<protein>
    <recommendedName>
        <fullName evidence="1">GMP reductase</fullName>
        <ecNumber evidence="1">1.7.1.7</ecNumber>
    </recommendedName>
    <alternativeName>
        <fullName evidence="1">Guanosine 5'-monophosphate oxidoreductase</fullName>
        <shortName evidence="1">Guanosine monophosphate reductase</shortName>
    </alternativeName>
</protein>
<gene>
    <name evidence="1" type="primary">guaC</name>
    <name type="ordered locus">SP_1249</name>
</gene>
<keyword id="KW-0521">NADP</keyword>
<keyword id="KW-0560">Oxidoreductase</keyword>
<keyword id="KW-1185">Reference proteome</keyword>
<name>GUAC_STRPN</name>
<dbReference type="EC" id="1.7.1.7" evidence="1"/>
<dbReference type="EMBL" id="AE005672">
    <property type="protein sequence ID" value="AAK75354.1"/>
    <property type="molecule type" value="Genomic_DNA"/>
</dbReference>
<dbReference type="PIR" id="A95145">
    <property type="entry name" value="A95145"/>
</dbReference>
<dbReference type="RefSeq" id="WP_000931182.1">
    <property type="nucleotide sequence ID" value="NZ_CP155539.1"/>
</dbReference>
<dbReference type="SMR" id="Q97QG5"/>
<dbReference type="PaxDb" id="170187-SP_1249"/>
<dbReference type="EnsemblBacteria" id="AAK75354">
    <property type="protein sequence ID" value="AAK75354"/>
    <property type="gene ID" value="SP_1249"/>
</dbReference>
<dbReference type="KEGG" id="spn:SP_1249"/>
<dbReference type="eggNOG" id="COG0516">
    <property type="taxonomic scope" value="Bacteria"/>
</dbReference>
<dbReference type="PhylomeDB" id="Q97QG5"/>
<dbReference type="BioCyc" id="SPNE170187:G1FZB-1264-MONOMER"/>
<dbReference type="Proteomes" id="UP000000585">
    <property type="component" value="Chromosome"/>
</dbReference>
<dbReference type="GO" id="GO:0005829">
    <property type="term" value="C:cytosol"/>
    <property type="evidence" value="ECO:0007669"/>
    <property type="project" value="TreeGrafter"/>
</dbReference>
<dbReference type="GO" id="GO:1902560">
    <property type="term" value="C:GMP reductase complex"/>
    <property type="evidence" value="ECO:0007669"/>
    <property type="project" value="InterPro"/>
</dbReference>
<dbReference type="GO" id="GO:0003920">
    <property type="term" value="F:GMP reductase activity"/>
    <property type="evidence" value="ECO:0007669"/>
    <property type="project" value="UniProtKB-UniRule"/>
</dbReference>
<dbReference type="GO" id="GO:0006163">
    <property type="term" value="P:purine nucleotide metabolic process"/>
    <property type="evidence" value="ECO:0007669"/>
    <property type="project" value="UniProtKB-UniRule"/>
</dbReference>
<dbReference type="CDD" id="cd00381">
    <property type="entry name" value="IMPDH"/>
    <property type="match status" value="1"/>
</dbReference>
<dbReference type="FunFam" id="3.20.20.70:FF:000079">
    <property type="entry name" value="GMP reductase"/>
    <property type="match status" value="1"/>
</dbReference>
<dbReference type="Gene3D" id="3.20.20.70">
    <property type="entry name" value="Aldolase class I"/>
    <property type="match status" value="1"/>
</dbReference>
<dbReference type="HAMAP" id="MF_01511">
    <property type="entry name" value="GMP_reduct_type2"/>
    <property type="match status" value="1"/>
</dbReference>
<dbReference type="InterPro" id="IPR013785">
    <property type="entry name" value="Aldolase_TIM"/>
</dbReference>
<dbReference type="InterPro" id="IPR050139">
    <property type="entry name" value="GMP_reductase"/>
</dbReference>
<dbReference type="InterPro" id="IPR005994">
    <property type="entry name" value="GuaC_type_2"/>
</dbReference>
<dbReference type="InterPro" id="IPR015875">
    <property type="entry name" value="IMP_DH/GMP_Rdtase_CS"/>
</dbReference>
<dbReference type="InterPro" id="IPR001093">
    <property type="entry name" value="IMP_DH_GMPRt"/>
</dbReference>
<dbReference type="NCBIfam" id="TIGR01306">
    <property type="entry name" value="GMP_reduct_2"/>
    <property type="match status" value="1"/>
</dbReference>
<dbReference type="NCBIfam" id="NF003966">
    <property type="entry name" value="PRK05458.1"/>
    <property type="match status" value="1"/>
</dbReference>
<dbReference type="PANTHER" id="PTHR43170">
    <property type="entry name" value="GMP REDUCTASE"/>
    <property type="match status" value="1"/>
</dbReference>
<dbReference type="PANTHER" id="PTHR43170:SF5">
    <property type="entry name" value="GMP REDUCTASE"/>
    <property type="match status" value="1"/>
</dbReference>
<dbReference type="Pfam" id="PF00478">
    <property type="entry name" value="IMPDH"/>
    <property type="match status" value="1"/>
</dbReference>
<dbReference type="PIRSF" id="PIRSF036500">
    <property type="entry name" value="GMP_red_Firmic"/>
    <property type="match status" value="1"/>
</dbReference>
<dbReference type="SMART" id="SM01240">
    <property type="entry name" value="IMPDH"/>
    <property type="match status" value="1"/>
</dbReference>
<dbReference type="SUPFAM" id="SSF51412">
    <property type="entry name" value="Inosine monophosphate dehydrogenase (IMPDH)"/>
    <property type="match status" value="1"/>
</dbReference>
<dbReference type="PROSITE" id="PS00487">
    <property type="entry name" value="IMP_DH_GMP_RED"/>
    <property type="match status" value="1"/>
</dbReference>
<accession>Q97QG5</accession>
<evidence type="ECO:0000255" key="1">
    <source>
        <dbReference type="HAMAP-Rule" id="MF_01511"/>
    </source>
</evidence>
<proteinExistence type="inferred from homology"/>